<name>SYH_LISIN</name>
<sequence length="425" mass="48437">MDLQLPRGTRDILPEEVSKWHFLESAFNKVCENYQYEEIRTPIFEHTELFERGVGDSTDIVSKEMYTFLDKGGRSLTLRPEGTASVVRAFVEHKLYGEVSQPIKMYYNEPMFRYERPQGGRQRQFTQMGIEALGSDDPSIDVEVISLAMEFFRKIGLTNIKLVINSLGDKESRLKHREALVAHFEPHIDEFCAECQVRLHKNPLRILDCKKDHDNPLIQSAPSILDFLNEESVAYFENVKKYLTALEIPFEIDPTMVRGLDYYNHTTFEIMSVEEGFGAKTTLCGGGRYHGLVKEFGGPDTPGIGFGIGVERILLALEKAEINIPETKPLEVYVITAQPEAELKAVTLVNKLRQNGISAEKDYLKRKLKAQLKDANRKKAIYTVILGEEELQTGNYQLKNMETGEQEAVSETTIIEKLTNTKEEK</sequence>
<protein>
    <recommendedName>
        <fullName evidence="1">Histidine--tRNA ligase</fullName>
        <ecNumber evidence="1">6.1.1.21</ecNumber>
    </recommendedName>
    <alternativeName>
        <fullName evidence="1">Histidyl-tRNA synthetase</fullName>
        <shortName evidence="1">HisRS</shortName>
    </alternativeName>
</protein>
<feature type="chain" id="PRO_0000136187" description="Histidine--tRNA ligase">
    <location>
        <begin position="1"/>
        <end position="425"/>
    </location>
</feature>
<dbReference type="EC" id="6.1.1.21" evidence="1"/>
<dbReference type="EMBL" id="AL596169">
    <property type="protein sequence ID" value="CAC96786.1"/>
    <property type="molecule type" value="Genomic_DNA"/>
</dbReference>
<dbReference type="PIR" id="AB1627">
    <property type="entry name" value="AB1627"/>
</dbReference>
<dbReference type="RefSeq" id="WP_010991591.1">
    <property type="nucleotide sequence ID" value="NC_003212.1"/>
</dbReference>
<dbReference type="SMR" id="Q92BJ3"/>
<dbReference type="STRING" id="272626.gene:17565886"/>
<dbReference type="GeneID" id="93234937"/>
<dbReference type="KEGG" id="lin:hisS"/>
<dbReference type="eggNOG" id="COG0124">
    <property type="taxonomic scope" value="Bacteria"/>
</dbReference>
<dbReference type="HOGENOM" id="CLU_025113_1_1_9"/>
<dbReference type="OrthoDB" id="9800814at2"/>
<dbReference type="Proteomes" id="UP000002513">
    <property type="component" value="Chromosome"/>
</dbReference>
<dbReference type="GO" id="GO:0005737">
    <property type="term" value="C:cytoplasm"/>
    <property type="evidence" value="ECO:0007669"/>
    <property type="project" value="UniProtKB-SubCell"/>
</dbReference>
<dbReference type="GO" id="GO:0005524">
    <property type="term" value="F:ATP binding"/>
    <property type="evidence" value="ECO:0007669"/>
    <property type="project" value="UniProtKB-UniRule"/>
</dbReference>
<dbReference type="GO" id="GO:0140096">
    <property type="term" value="F:catalytic activity, acting on a protein"/>
    <property type="evidence" value="ECO:0007669"/>
    <property type="project" value="UniProtKB-ARBA"/>
</dbReference>
<dbReference type="GO" id="GO:0004821">
    <property type="term" value="F:histidine-tRNA ligase activity"/>
    <property type="evidence" value="ECO:0007669"/>
    <property type="project" value="UniProtKB-UniRule"/>
</dbReference>
<dbReference type="GO" id="GO:0016740">
    <property type="term" value="F:transferase activity"/>
    <property type="evidence" value="ECO:0007669"/>
    <property type="project" value="UniProtKB-ARBA"/>
</dbReference>
<dbReference type="GO" id="GO:0006427">
    <property type="term" value="P:histidyl-tRNA aminoacylation"/>
    <property type="evidence" value="ECO:0007669"/>
    <property type="project" value="UniProtKB-UniRule"/>
</dbReference>
<dbReference type="CDD" id="cd00773">
    <property type="entry name" value="HisRS-like_core"/>
    <property type="match status" value="1"/>
</dbReference>
<dbReference type="CDD" id="cd00859">
    <property type="entry name" value="HisRS_anticodon"/>
    <property type="match status" value="1"/>
</dbReference>
<dbReference type="FunFam" id="3.30.930.10:FF:000005">
    <property type="entry name" value="Histidine--tRNA ligase"/>
    <property type="match status" value="1"/>
</dbReference>
<dbReference type="Gene3D" id="3.40.50.800">
    <property type="entry name" value="Anticodon-binding domain"/>
    <property type="match status" value="1"/>
</dbReference>
<dbReference type="Gene3D" id="3.30.930.10">
    <property type="entry name" value="Bira Bifunctional Protein, Domain 2"/>
    <property type="match status" value="1"/>
</dbReference>
<dbReference type="HAMAP" id="MF_00127">
    <property type="entry name" value="His_tRNA_synth"/>
    <property type="match status" value="1"/>
</dbReference>
<dbReference type="InterPro" id="IPR006195">
    <property type="entry name" value="aa-tRNA-synth_II"/>
</dbReference>
<dbReference type="InterPro" id="IPR045864">
    <property type="entry name" value="aa-tRNA-synth_II/BPL/LPL"/>
</dbReference>
<dbReference type="InterPro" id="IPR004154">
    <property type="entry name" value="Anticodon-bd"/>
</dbReference>
<dbReference type="InterPro" id="IPR036621">
    <property type="entry name" value="Anticodon-bd_dom_sf"/>
</dbReference>
<dbReference type="InterPro" id="IPR015807">
    <property type="entry name" value="His-tRNA-ligase"/>
</dbReference>
<dbReference type="InterPro" id="IPR041715">
    <property type="entry name" value="HisRS-like_core"/>
</dbReference>
<dbReference type="InterPro" id="IPR004516">
    <property type="entry name" value="HisRS/HisZ"/>
</dbReference>
<dbReference type="InterPro" id="IPR033656">
    <property type="entry name" value="HisRS_anticodon"/>
</dbReference>
<dbReference type="NCBIfam" id="TIGR00442">
    <property type="entry name" value="hisS"/>
    <property type="match status" value="1"/>
</dbReference>
<dbReference type="PANTHER" id="PTHR43707:SF1">
    <property type="entry name" value="HISTIDINE--TRNA LIGASE, MITOCHONDRIAL-RELATED"/>
    <property type="match status" value="1"/>
</dbReference>
<dbReference type="PANTHER" id="PTHR43707">
    <property type="entry name" value="HISTIDYL-TRNA SYNTHETASE"/>
    <property type="match status" value="1"/>
</dbReference>
<dbReference type="Pfam" id="PF03129">
    <property type="entry name" value="HGTP_anticodon"/>
    <property type="match status" value="1"/>
</dbReference>
<dbReference type="Pfam" id="PF13393">
    <property type="entry name" value="tRNA-synt_His"/>
    <property type="match status" value="1"/>
</dbReference>
<dbReference type="PIRSF" id="PIRSF001549">
    <property type="entry name" value="His-tRNA_synth"/>
    <property type="match status" value="1"/>
</dbReference>
<dbReference type="SUPFAM" id="SSF52954">
    <property type="entry name" value="Class II aaRS ABD-related"/>
    <property type="match status" value="1"/>
</dbReference>
<dbReference type="SUPFAM" id="SSF55681">
    <property type="entry name" value="Class II aaRS and biotin synthetases"/>
    <property type="match status" value="1"/>
</dbReference>
<dbReference type="PROSITE" id="PS50862">
    <property type="entry name" value="AA_TRNA_LIGASE_II"/>
    <property type="match status" value="1"/>
</dbReference>
<keyword id="KW-0030">Aminoacyl-tRNA synthetase</keyword>
<keyword id="KW-0067">ATP-binding</keyword>
<keyword id="KW-0963">Cytoplasm</keyword>
<keyword id="KW-0436">Ligase</keyword>
<keyword id="KW-0547">Nucleotide-binding</keyword>
<keyword id="KW-0648">Protein biosynthesis</keyword>
<accession>Q92BJ3</accession>
<proteinExistence type="inferred from homology"/>
<gene>
    <name evidence="1" type="primary">hisS</name>
    <name type="ordered locus">lin1555</name>
</gene>
<comment type="catalytic activity">
    <reaction evidence="1">
        <text>tRNA(His) + L-histidine + ATP = L-histidyl-tRNA(His) + AMP + diphosphate + H(+)</text>
        <dbReference type="Rhea" id="RHEA:17313"/>
        <dbReference type="Rhea" id="RHEA-COMP:9665"/>
        <dbReference type="Rhea" id="RHEA-COMP:9689"/>
        <dbReference type="ChEBI" id="CHEBI:15378"/>
        <dbReference type="ChEBI" id="CHEBI:30616"/>
        <dbReference type="ChEBI" id="CHEBI:33019"/>
        <dbReference type="ChEBI" id="CHEBI:57595"/>
        <dbReference type="ChEBI" id="CHEBI:78442"/>
        <dbReference type="ChEBI" id="CHEBI:78527"/>
        <dbReference type="ChEBI" id="CHEBI:456215"/>
        <dbReference type="EC" id="6.1.1.21"/>
    </reaction>
</comment>
<comment type="subunit">
    <text evidence="1">Homodimer.</text>
</comment>
<comment type="subcellular location">
    <subcellularLocation>
        <location evidence="1">Cytoplasm</location>
    </subcellularLocation>
</comment>
<comment type="similarity">
    <text evidence="1">Belongs to the class-II aminoacyl-tRNA synthetase family.</text>
</comment>
<evidence type="ECO:0000255" key="1">
    <source>
        <dbReference type="HAMAP-Rule" id="MF_00127"/>
    </source>
</evidence>
<reference key="1">
    <citation type="journal article" date="2001" name="Science">
        <title>Comparative genomics of Listeria species.</title>
        <authorList>
            <person name="Glaser P."/>
            <person name="Frangeul L."/>
            <person name="Buchrieser C."/>
            <person name="Rusniok C."/>
            <person name="Amend A."/>
            <person name="Baquero F."/>
            <person name="Berche P."/>
            <person name="Bloecker H."/>
            <person name="Brandt P."/>
            <person name="Chakraborty T."/>
            <person name="Charbit A."/>
            <person name="Chetouani F."/>
            <person name="Couve E."/>
            <person name="de Daruvar A."/>
            <person name="Dehoux P."/>
            <person name="Domann E."/>
            <person name="Dominguez-Bernal G."/>
            <person name="Duchaud E."/>
            <person name="Durant L."/>
            <person name="Dussurget O."/>
            <person name="Entian K.-D."/>
            <person name="Fsihi H."/>
            <person name="Garcia-del Portillo F."/>
            <person name="Garrido P."/>
            <person name="Gautier L."/>
            <person name="Goebel W."/>
            <person name="Gomez-Lopez N."/>
            <person name="Hain T."/>
            <person name="Hauf J."/>
            <person name="Jackson D."/>
            <person name="Jones L.-M."/>
            <person name="Kaerst U."/>
            <person name="Kreft J."/>
            <person name="Kuhn M."/>
            <person name="Kunst F."/>
            <person name="Kurapkat G."/>
            <person name="Madueno E."/>
            <person name="Maitournam A."/>
            <person name="Mata Vicente J."/>
            <person name="Ng E."/>
            <person name="Nedjari H."/>
            <person name="Nordsiek G."/>
            <person name="Novella S."/>
            <person name="de Pablos B."/>
            <person name="Perez-Diaz J.-C."/>
            <person name="Purcell R."/>
            <person name="Remmel B."/>
            <person name="Rose M."/>
            <person name="Schlueter T."/>
            <person name="Simoes N."/>
            <person name="Tierrez A."/>
            <person name="Vazquez-Boland J.-A."/>
            <person name="Voss H."/>
            <person name="Wehland J."/>
            <person name="Cossart P."/>
        </authorList>
    </citation>
    <scope>NUCLEOTIDE SEQUENCE [LARGE SCALE GENOMIC DNA]</scope>
    <source>
        <strain>ATCC BAA-680 / CLIP 11262</strain>
    </source>
</reference>
<organism>
    <name type="scientific">Listeria innocua serovar 6a (strain ATCC BAA-680 / CLIP 11262)</name>
    <dbReference type="NCBI Taxonomy" id="272626"/>
    <lineage>
        <taxon>Bacteria</taxon>
        <taxon>Bacillati</taxon>
        <taxon>Bacillota</taxon>
        <taxon>Bacilli</taxon>
        <taxon>Bacillales</taxon>
        <taxon>Listeriaceae</taxon>
        <taxon>Listeria</taxon>
    </lineage>
</organism>